<keyword id="KW-0001">2Fe-2S</keyword>
<keyword id="KW-0997">Cell inner membrane</keyword>
<keyword id="KW-1003">Cell membrane</keyword>
<keyword id="KW-0274">FAD</keyword>
<keyword id="KW-0285">Flavoprotein</keyword>
<keyword id="KW-0406">Ion transport</keyword>
<keyword id="KW-0408">Iron</keyword>
<keyword id="KW-0411">Iron-sulfur</keyword>
<keyword id="KW-0472">Membrane</keyword>
<keyword id="KW-0479">Metal-binding</keyword>
<keyword id="KW-0520">NAD</keyword>
<keyword id="KW-1185">Reference proteome</keyword>
<keyword id="KW-0915">Sodium</keyword>
<keyword id="KW-0739">Sodium transport</keyword>
<keyword id="KW-1278">Translocase</keyword>
<keyword id="KW-0812">Transmembrane</keyword>
<keyword id="KW-1133">Transmembrane helix</keyword>
<keyword id="KW-0813">Transport</keyword>
<keyword id="KW-0830">Ubiquinone</keyword>
<accession>Q5QYQ8</accession>
<proteinExistence type="inferred from homology"/>
<gene>
    <name evidence="1" type="primary">nqrF</name>
    <name type="ordered locus">IL1045</name>
</gene>
<protein>
    <recommendedName>
        <fullName evidence="1">Na(+)-translocating NADH-quinone reductase subunit F</fullName>
        <shortName evidence="1">Na(+)-NQR subunit F</shortName>
        <shortName evidence="1">Na(+)-translocating NQR subunit F</shortName>
        <ecNumber evidence="1">7.2.1.1</ecNumber>
    </recommendedName>
    <alternativeName>
        <fullName evidence="1">NQR complex subunit F</fullName>
    </alternativeName>
    <alternativeName>
        <fullName evidence="1">NQR-1 subunit F</fullName>
    </alternativeName>
</protein>
<evidence type="ECO:0000255" key="1">
    <source>
        <dbReference type="HAMAP-Rule" id="MF_00430"/>
    </source>
</evidence>
<name>NQRF_IDILO</name>
<comment type="function">
    <text evidence="1">NQR complex catalyzes the reduction of ubiquinone-1 to ubiquinol by two successive reactions, coupled with the transport of Na(+) ions from the cytoplasm to the periplasm. The first step is catalyzed by NqrF, which accepts electrons from NADH and reduces ubiquinone-1 to ubisemiquinone by a one-electron transfer pathway.</text>
</comment>
<comment type="catalytic activity">
    <reaction evidence="1">
        <text>a ubiquinone + n Na(+)(in) + NADH + H(+) = a ubiquinol + n Na(+)(out) + NAD(+)</text>
        <dbReference type="Rhea" id="RHEA:47748"/>
        <dbReference type="Rhea" id="RHEA-COMP:9565"/>
        <dbReference type="Rhea" id="RHEA-COMP:9566"/>
        <dbReference type="ChEBI" id="CHEBI:15378"/>
        <dbReference type="ChEBI" id="CHEBI:16389"/>
        <dbReference type="ChEBI" id="CHEBI:17976"/>
        <dbReference type="ChEBI" id="CHEBI:29101"/>
        <dbReference type="ChEBI" id="CHEBI:57540"/>
        <dbReference type="ChEBI" id="CHEBI:57945"/>
        <dbReference type="EC" id="7.2.1.1"/>
    </reaction>
</comment>
<comment type="cofactor">
    <cofactor evidence="1">
        <name>[2Fe-2S] cluster</name>
        <dbReference type="ChEBI" id="CHEBI:190135"/>
    </cofactor>
    <text evidence="1">Binds 1 [2Fe-2S] cluster.</text>
</comment>
<comment type="cofactor">
    <cofactor evidence="1">
        <name>FAD</name>
        <dbReference type="ChEBI" id="CHEBI:57692"/>
    </cofactor>
</comment>
<comment type="subunit">
    <text evidence="1">Composed of six subunits; NqrA, NqrB, NqrC, NqrD, NqrE and NqrF.</text>
</comment>
<comment type="subcellular location">
    <subcellularLocation>
        <location evidence="1">Cell inner membrane</location>
        <topology evidence="1">Single-pass membrane protein</topology>
    </subcellularLocation>
</comment>
<comment type="similarity">
    <text evidence="1">Belongs to the NqrF family.</text>
</comment>
<sequence length="408" mass="45696">MQEIYLGVGMFTIIVLVLVAIIMFAKSKLVPQGDVEILINDDEDKKIVTQPGTKLLGALANAGIFVSSACGGGGSCGQCRVTVKEGGGDILPTELDHITKREAREGCRLSCQVNVKQDMEIELPEEVFGIRKWDCTVKSNDNVATFIKEFIVQLPEGEEVPFRAGGFIQIEAPPHHVKYKDFDISEEYHGDWDRFGFFDVESKVDEEVVRAYSMANYPEEKGIIMLNVRIATPPPNDLSLPAGKMSSYIFSLKPGDKVTISGPFGEFFAKDTDAEMVFIGGGAGMAPMRSHLFDQMRRIKTDRKVSFWYGARSKKEMFYVEDFDMLAEENENFDWHVALSDPQPEDNWEGDTGFIHNVLYERYLKDHDAPEDCEFYMCGPPVMNAAVINLLKDLGVEDENIMLDDFGG</sequence>
<dbReference type="EC" id="7.2.1.1" evidence="1"/>
<dbReference type="EMBL" id="AE017340">
    <property type="protein sequence ID" value="AAV81885.1"/>
    <property type="molecule type" value="Genomic_DNA"/>
</dbReference>
<dbReference type="RefSeq" id="WP_011234296.1">
    <property type="nucleotide sequence ID" value="NC_006512.1"/>
</dbReference>
<dbReference type="SMR" id="Q5QYQ8"/>
<dbReference type="STRING" id="283942.IL1045"/>
<dbReference type="GeneID" id="41336211"/>
<dbReference type="KEGG" id="ilo:IL1045"/>
<dbReference type="eggNOG" id="COG2871">
    <property type="taxonomic scope" value="Bacteria"/>
</dbReference>
<dbReference type="HOGENOM" id="CLU_003827_7_2_6"/>
<dbReference type="OrthoDB" id="9806195at2"/>
<dbReference type="Proteomes" id="UP000001171">
    <property type="component" value="Chromosome"/>
</dbReference>
<dbReference type="GO" id="GO:0005886">
    <property type="term" value="C:plasma membrane"/>
    <property type="evidence" value="ECO:0007669"/>
    <property type="project" value="UniProtKB-SubCell"/>
</dbReference>
<dbReference type="GO" id="GO:0051537">
    <property type="term" value="F:2 iron, 2 sulfur cluster binding"/>
    <property type="evidence" value="ECO:0007669"/>
    <property type="project" value="UniProtKB-KW"/>
</dbReference>
<dbReference type="GO" id="GO:0009055">
    <property type="term" value="F:electron transfer activity"/>
    <property type="evidence" value="ECO:0007669"/>
    <property type="project" value="UniProtKB-UniRule"/>
</dbReference>
<dbReference type="GO" id="GO:0046872">
    <property type="term" value="F:metal ion binding"/>
    <property type="evidence" value="ECO:0007669"/>
    <property type="project" value="UniProtKB-KW"/>
</dbReference>
<dbReference type="GO" id="GO:0016655">
    <property type="term" value="F:oxidoreductase activity, acting on NAD(P)H, quinone or similar compound as acceptor"/>
    <property type="evidence" value="ECO:0007669"/>
    <property type="project" value="InterPro"/>
</dbReference>
<dbReference type="GO" id="GO:0006814">
    <property type="term" value="P:sodium ion transport"/>
    <property type="evidence" value="ECO:0007669"/>
    <property type="project" value="UniProtKB-UniRule"/>
</dbReference>
<dbReference type="CDD" id="cd06188">
    <property type="entry name" value="NADH_quinone_reductase"/>
    <property type="match status" value="1"/>
</dbReference>
<dbReference type="FunFam" id="3.40.50.80:FF:000014">
    <property type="entry name" value="Na(+)-translocating NADH-quinone reductase subunit F"/>
    <property type="match status" value="1"/>
</dbReference>
<dbReference type="Gene3D" id="3.10.20.30">
    <property type="match status" value="1"/>
</dbReference>
<dbReference type="Gene3D" id="3.40.50.80">
    <property type="entry name" value="Nucleotide-binding domain of ferredoxin-NADP reductase (FNR) module"/>
    <property type="match status" value="1"/>
</dbReference>
<dbReference type="Gene3D" id="2.40.30.10">
    <property type="entry name" value="Translation factors"/>
    <property type="match status" value="1"/>
</dbReference>
<dbReference type="HAMAP" id="MF_00430">
    <property type="entry name" value="NqrF"/>
    <property type="match status" value="1"/>
</dbReference>
<dbReference type="InterPro" id="IPR036010">
    <property type="entry name" value="2Fe-2S_ferredoxin-like_sf"/>
</dbReference>
<dbReference type="InterPro" id="IPR001041">
    <property type="entry name" value="2Fe-2S_ferredoxin-type"/>
</dbReference>
<dbReference type="InterPro" id="IPR012675">
    <property type="entry name" value="Beta-grasp_dom_sf"/>
</dbReference>
<dbReference type="InterPro" id="IPR008333">
    <property type="entry name" value="Cbr1-like_FAD-bd_dom"/>
</dbReference>
<dbReference type="InterPro" id="IPR017927">
    <property type="entry name" value="FAD-bd_FR_type"/>
</dbReference>
<dbReference type="InterPro" id="IPR039261">
    <property type="entry name" value="FNR_nucleotide-bd"/>
</dbReference>
<dbReference type="InterPro" id="IPR010205">
    <property type="entry name" value="NqrF"/>
</dbReference>
<dbReference type="InterPro" id="IPR001433">
    <property type="entry name" value="OxRdtase_FAD/NAD-bd"/>
</dbReference>
<dbReference type="InterPro" id="IPR017938">
    <property type="entry name" value="Riboflavin_synthase-like_b-brl"/>
</dbReference>
<dbReference type="NCBIfam" id="TIGR01941">
    <property type="entry name" value="nqrF"/>
    <property type="match status" value="1"/>
</dbReference>
<dbReference type="PANTHER" id="PTHR43644">
    <property type="entry name" value="NA(+)-TRANSLOCATING NADH-QUINONE REDUCTASE SUBUNIT"/>
    <property type="match status" value="1"/>
</dbReference>
<dbReference type="PANTHER" id="PTHR43644:SF1">
    <property type="entry name" value="NAD(P)H-FLAVIN REDUCTASE"/>
    <property type="match status" value="1"/>
</dbReference>
<dbReference type="Pfam" id="PF00970">
    <property type="entry name" value="FAD_binding_6"/>
    <property type="match status" value="1"/>
</dbReference>
<dbReference type="Pfam" id="PF00111">
    <property type="entry name" value="Fer2"/>
    <property type="match status" value="1"/>
</dbReference>
<dbReference type="Pfam" id="PF00175">
    <property type="entry name" value="NAD_binding_1"/>
    <property type="match status" value="1"/>
</dbReference>
<dbReference type="PIRSF" id="PIRSF000044">
    <property type="entry name" value="Cis_Diol_DH_RD"/>
    <property type="match status" value="1"/>
</dbReference>
<dbReference type="SUPFAM" id="SSF54292">
    <property type="entry name" value="2Fe-2S ferredoxin-like"/>
    <property type="match status" value="1"/>
</dbReference>
<dbReference type="SUPFAM" id="SSF52343">
    <property type="entry name" value="Ferredoxin reductase-like, C-terminal NADP-linked domain"/>
    <property type="match status" value="1"/>
</dbReference>
<dbReference type="SUPFAM" id="SSF63380">
    <property type="entry name" value="Riboflavin synthase domain-like"/>
    <property type="match status" value="1"/>
</dbReference>
<dbReference type="PROSITE" id="PS51085">
    <property type="entry name" value="2FE2S_FER_2"/>
    <property type="match status" value="1"/>
</dbReference>
<dbReference type="PROSITE" id="PS51384">
    <property type="entry name" value="FAD_FR"/>
    <property type="match status" value="1"/>
</dbReference>
<organism>
    <name type="scientific">Idiomarina loihiensis (strain ATCC BAA-735 / DSM 15497 / L2-TR)</name>
    <dbReference type="NCBI Taxonomy" id="283942"/>
    <lineage>
        <taxon>Bacteria</taxon>
        <taxon>Pseudomonadati</taxon>
        <taxon>Pseudomonadota</taxon>
        <taxon>Gammaproteobacteria</taxon>
        <taxon>Alteromonadales</taxon>
        <taxon>Idiomarinaceae</taxon>
        <taxon>Idiomarina</taxon>
    </lineage>
</organism>
<reference key="1">
    <citation type="journal article" date="2004" name="Proc. Natl. Acad. Sci. U.S.A.">
        <title>Genome sequence of the deep-sea gamma-proteobacterium Idiomarina loihiensis reveals amino acid fermentation as a source of carbon and energy.</title>
        <authorList>
            <person name="Hou S."/>
            <person name="Saw J.H."/>
            <person name="Lee K.S."/>
            <person name="Freitas T.A."/>
            <person name="Belisle C."/>
            <person name="Kawarabayasi Y."/>
            <person name="Donachie S.P."/>
            <person name="Pikina A."/>
            <person name="Galperin M.Y."/>
            <person name="Koonin E.V."/>
            <person name="Makarova K.S."/>
            <person name="Omelchenko M.V."/>
            <person name="Sorokin A."/>
            <person name="Wolf Y.I."/>
            <person name="Li Q.X."/>
            <person name="Keum Y.S."/>
            <person name="Campbell S."/>
            <person name="Denery J."/>
            <person name="Aizawa S."/>
            <person name="Shibata S."/>
            <person name="Malahoff A."/>
            <person name="Alam M."/>
        </authorList>
    </citation>
    <scope>NUCLEOTIDE SEQUENCE [LARGE SCALE GENOMIC DNA]</scope>
    <source>
        <strain>ATCC BAA-735 / DSM 15497 / L2-TR</strain>
    </source>
</reference>
<feature type="chain" id="PRO_1000080580" description="Na(+)-translocating NADH-quinone reductase subunit F">
    <location>
        <begin position="1"/>
        <end position="408"/>
    </location>
</feature>
<feature type="transmembrane region" description="Helical" evidence="1">
    <location>
        <begin position="4"/>
        <end position="24"/>
    </location>
</feature>
<feature type="domain" description="2Fe-2S ferredoxin-type" evidence="1">
    <location>
        <begin position="33"/>
        <end position="127"/>
    </location>
</feature>
<feature type="domain" description="FAD-binding FR-type" evidence="1">
    <location>
        <begin position="130"/>
        <end position="270"/>
    </location>
</feature>
<feature type="binding site" evidence="1">
    <location>
        <position position="70"/>
    </location>
    <ligand>
        <name>[2Fe-2S] cluster</name>
        <dbReference type="ChEBI" id="CHEBI:190135"/>
    </ligand>
</feature>
<feature type="binding site" evidence="1">
    <location>
        <position position="76"/>
    </location>
    <ligand>
        <name>[2Fe-2S] cluster</name>
        <dbReference type="ChEBI" id="CHEBI:190135"/>
    </ligand>
</feature>
<feature type="binding site" evidence="1">
    <location>
        <position position="79"/>
    </location>
    <ligand>
        <name>[2Fe-2S] cluster</name>
        <dbReference type="ChEBI" id="CHEBI:190135"/>
    </ligand>
</feature>
<feature type="binding site" evidence="1">
    <location>
        <position position="111"/>
    </location>
    <ligand>
        <name>[2Fe-2S] cluster</name>
        <dbReference type="ChEBI" id="CHEBI:190135"/>
    </ligand>
</feature>